<reference evidence="17" key="1">
    <citation type="journal article" date="2012" name="J. Allergy Clin. Immunol.">
        <title>Identification of a new major dog allergen highly cross-reactive with Fel d 4 in a population of cat- and dog-sensitized patients.</title>
        <authorList>
            <person name="Hilger C."/>
            <person name="Swiontek K."/>
            <person name="Arumugam K."/>
            <person name="Lehners C."/>
            <person name="Hentges F."/>
        </authorList>
    </citation>
    <scope>NUCLEOTIDE SEQUENCE [MRNA]</scope>
    <scope>3D-STRUCTURE MODELING</scope>
    <scope>TISSUE SPECIFICITY</scope>
    <scope>ALLERGEN</scope>
    <source>
        <tissue evidence="11">Submandibular gland</tissue>
    </source>
</reference>
<reference evidence="15" key="2">
    <citation type="journal article" date="2005" name="Nature">
        <title>Genome sequence, comparative analysis and haplotype structure of the domestic dog.</title>
        <authorList>
            <person name="Lindblad-Toh K."/>
            <person name="Wade C.M."/>
            <person name="Mikkelsen T.S."/>
            <person name="Karlsson E.K."/>
            <person name="Jaffe D.B."/>
            <person name="Kamal M."/>
            <person name="Clamp M."/>
            <person name="Chang J.L."/>
            <person name="Kulbokas E.J. III"/>
            <person name="Zody M.C."/>
            <person name="Mauceli E."/>
            <person name="Xie X."/>
            <person name="Breen M."/>
            <person name="Wayne R.K."/>
            <person name="Ostrander E.A."/>
            <person name="Ponting C.P."/>
            <person name="Galibert F."/>
            <person name="Smith D.R."/>
            <person name="deJong P.J."/>
            <person name="Kirkness E.F."/>
            <person name="Alvarez P."/>
            <person name="Biagi T."/>
            <person name="Brockman W."/>
            <person name="Butler J."/>
            <person name="Chin C.-W."/>
            <person name="Cook A."/>
            <person name="Cuff J."/>
            <person name="Daly M.J."/>
            <person name="DeCaprio D."/>
            <person name="Gnerre S."/>
            <person name="Grabherr M."/>
            <person name="Kellis M."/>
            <person name="Kleber M."/>
            <person name="Bardeleben C."/>
            <person name="Goodstadt L."/>
            <person name="Heger A."/>
            <person name="Hitte C."/>
            <person name="Kim L."/>
            <person name="Koepfli K.-P."/>
            <person name="Parker H.G."/>
            <person name="Pollinger J.P."/>
            <person name="Searle S.M.J."/>
            <person name="Sutter N.B."/>
            <person name="Thomas R."/>
            <person name="Webber C."/>
            <person name="Baldwin J."/>
            <person name="Abebe A."/>
            <person name="Abouelleil A."/>
            <person name="Aftuck L."/>
            <person name="Ait-Zahra M."/>
            <person name="Aldredge T."/>
            <person name="Allen N."/>
            <person name="An P."/>
            <person name="Anderson S."/>
            <person name="Antoine C."/>
            <person name="Arachchi H."/>
            <person name="Aslam A."/>
            <person name="Ayotte L."/>
            <person name="Bachantsang P."/>
            <person name="Barry A."/>
            <person name="Bayul T."/>
            <person name="Benamara M."/>
            <person name="Berlin A."/>
            <person name="Bessette D."/>
            <person name="Blitshteyn B."/>
            <person name="Bloom T."/>
            <person name="Blye J."/>
            <person name="Boguslavskiy L."/>
            <person name="Bonnet C."/>
            <person name="Boukhgalter B."/>
            <person name="Brown A."/>
            <person name="Cahill P."/>
            <person name="Calixte N."/>
            <person name="Camarata J."/>
            <person name="Cheshatsang Y."/>
            <person name="Chu J."/>
            <person name="Citroen M."/>
            <person name="Collymore A."/>
            <person name="Cooke P."/>
            <person name="Dawoe T."/>
            <person name="Daza R."/>
            <person name="Decktor K."/>
            <person name="DeGray S."/>
            <person name="Dhargay N."/>
            <person name="Dooley K."/>
            <person name="Dooley K."/>
            <person name="Dorje P."/>
            <person name="Dorjee K."/>
            <person name="Dorris L."/>
            <person name="Duffey N."/>
            <person name="Dupes A."/>
            <person name="Egbiremolen O."/>
            <person name="Elong R."/>
            <person name="Falk J."/>
            <person name="Farina A."/>
            <person name="Faro S."/>
            <person name="Ferguson D."/>
            <person name="Ferreira P."/>
            <person name="Fisher S."/>
            <person name="FitzGerald M."/>
            <person name="Foley K."/>
            <person name="Foley C."/>
            <person name="Franke A."/>
            <person name="Friedrich D."/>
            <person name="Gage D."/>
            <person name="Garber M."/>
            <person name="Gearin G."/>
            <person name="Giannoukos G."/>
            <person name="Goode T."/>
            <person name="Goyette A."/>
            <person name="Graham J."/>
            <person name="Grandbois E."/>
            <person name="Gyaltsen K."/>
            <person name="Hafez N."/>
            <person name="Hagopian D."/>
            <person name="Hagos B."/>
            <person name="Hall J."/>
            <person name="Healy C."/>
            <person name="Hegarty R."/>
            <person name="Honan T."/>
            <person name="Horn A."/>
            <person name="Houde N."/>
            <person name="Hughes L."/>
            <person name="Hunnicutt L."/>
            <person name="Husby M."/>
            <person name="Jester B."/>
            <person name="Jones C."/>
            <person name="Kamat A."/>
            <person name="Kanga B."/>
            <person name="Kells C."/>
            <person name="Khazanovich D."/>
            <person name="Kieu A.C."/>
            <person name="Kisner P."/>
            <person name="Kumar M."/>
            <person name="Lance K."/>
            <person name="Landers T."/>
            <person name="Lara M."/>
            <person name="Lee W."/>
            <person name="Leger J.-P."/>
            <person name="Lennon N."/>
            <person name="Leuper L."/>
            <person name="LeVine S."/>
            <person name="Liu J."/>
            <person name="Liu X."/>
            <person name="Lokyitsang Y."/>
            <person name="Lokyitsang T."/>
            <person name="Lui A."/>
            <person name="Macdonald J."/>
            <person name="Major J."/>
            <person name="Marabella R."/>
            <person name="Maru K."/>
            <person name="Matthews C."/>
            <person name="McDonough S."/>
            <person name="Mehta T."/>
            <person name="Meldrim J."/>
            <person name="Melnikov A."/>
            <person name="Meneus L."/>
            <person name="Mihalev A."/>
            <person name="Mihova T."/>
            <person name="Miller K."/>
            <person name="Mittelman R."/>
            <person name="Mlenga V."/>
            <person name="Mulrain L."/>
            <person name="Munson G."/>
            <person name="Navidi A."/>
            <person name="Naylor J."/>
            <person name="Nguyen T."/>
            <person name="Nguyen N."/>
            <person name="Nguyen C."/>
            <person name="Nguyen T."/>
            <person name="Nicol R."/>
            <person name="Norbu N."/>
            <person name="Norbu C."/>
            <person name="Novod N."/>
            <person name="Nyima T."/>
            <person name="Olandt P."/>
            <person name="O'Neill B."/>
            <person name="O'Neill K."/>
            <person name="Osman S."/>
            <person name="Oyono L."/>
            <person name="Patti C."/>
            <person name="Perrin D."/>
            <person name="Phunkhang P."/>
            <person name="Pierre F."/>
            <person name="Priest M."/>
            <person name="Rachupka A."/>
            <person name="Raghuraman S."/>
            <person name="Rameau R."/>
            <person name="Ray V."/>
            <person name="Raymond C."/>
            <person name="Rege F."/>
            <person name="Rise C."/>
            <person name="Rogers J."/>
            <person name="Rogov P."/>
            <person name="Sahalie J."/>
            <person name="Settipalli S."/>
            <person name="Sharpe T."/>
            <person name="Shea T."/>
            <person name="Sheehan M."/>
            <person name="Sherpa N."/>
            <person name="Shi J."/>
            <person name="Shih D."/>
            <person name="Sloan J."/>
            <person name="Smith C."/>
            <person name="Sparrow T."/>
            <person name="Stalker J."/>
            <person name="Stange-Thomann N."/>
            <person name="Stavropoulos S."/>
            <person name="Stone C."/>
            <person name="Stone S."/>
            <person name="Sykes S."/>
            <person name="Tchuinga P."/>
            <person name="Tenzing P."/>
            <person name="Tesfaye S."/>
            <person name="Thoulutsang D."/>
            <person name="Thoulutsang Y."/>
            <person name="Topham K."/>
            <person name="Topping I."/>
            <person name="Tsamla T."/>
            <person name="Vassiliev H."/>
            <person name="Venkataraman V."/>
            <person name="Vo A."/>
            <person name="Wangchuk T."/>
            <person name="Wangdi T."/>
            <person name="Weiand M."/>
            <person name="Wilkinson J."/>
            <person name="Wilson A."/>
            <person name="Yadav S."/>
            <person name="Yang S."/>
            <person name="Yang X."/>
            <person name="Young G."/>
            <person name="Yu Q."/>
            <person name="Zainoun J."/>
            <person name="Zembek L."/>
            <person name="Zimmer A."/>
            <person name="Lander E.S."/>
        </authorList>
    </citation>
    <scope>NUCLEOTIDE SEQUENCE [LARGE SCALE GENOMIC DNA]</scope>
    <source>
        <strain evidence="10">Boxer</strain>
    </source>
</reference>
<reference key="3">
    <citation type="journal article" date="2012" name="Allergy">
        <title>Characterization of the dog lipocalin allergen Can f 6: the role in cross-reactivity with cat and horse.</title>
        <authorList>
            <person name="Nilsson O.B."/>
            <person name="Binnmyr J."/>
            <person name="Zoltowska A."/>
            <person name="Saarne T."/>
            <person name="van Hage M."/>
            <person name="Groenlund H."/>
        </authorList>
    </citation>
    <scope>SUBUNIT</scope>
    <scope>TISSUE SPECIFICITY</scope>
    <scope>ALLERGEN</scope>
    <scope>CIRCULAR DICHROISM ANALYSIS</scope>
</reference>
<reference key="4">
    <citation type="journal article" date="2013" name="Allergy">
        <title>Dog saliva - an important source of dog allergens.</title>
        <authorList>
            <person name="Polovic N."/>
            <person name="Waden K."/>
            <person name="Binnmyr J."/>
            <person name="Hamsten C."/>
            <person name="Groenneberg R."/>
            <person name="Palmberg C."/>
            <person name="Milcic-Matic N."/>
            <person name="Bergman T."/>
            <person name="Groenlund H."/>
            <person name="van Hage M."/>
        </authorList>
    </citation>
    <scope>IDENTIFICATION BY MASS SPECTROMETRY</scope>
    <scope>SUBCELLULAR LOCATION</scope>
    <scope>TISSUE SPECIFICITY</scope>
    <scope>ALLERGEN</scope>
</reference>
<reference key="5">
    <citation type="journal article" date="2013" name="Allergy">
        <title>Clinical relevance of sensitization to cross-reactive lipocalin Can f 6.</title>
        <authorList>
            <person name="Jakob T."/>
            <person name="Hilger C."/>
            <person name="Hentges F."/>
        </authorList>
    </citation>
    <scope>ALLERGEN</scope>
</reference>
<reference key="6">
    <citation type="journal article" date="2017" name="Oncotarget">
        <title>Canis familiaris allergen Can f 6: expression, purification and analysis of B-cell epitopes in Chinese dog allergic children.</title>
        <authorList>
            <person name="Wang Y.J."/>
            <person name="Li L."/>
            <person name="Song W.J."/>
            <person name="Zhou Y.J."/>
            <person name="Cao M.D."/>
            <person name="Zuo X.R."/>
            <person name="Wei J.F."/>
        </authorList>
    </citation>
    <scope>3D-STRUCTURE MODELING</scope>
    <scope>ALLERGEN</scope>
    <scope>REGION</scope>
    <scope>SYNTHESIS OF 43-54; 76-83; 91-97; 100-109; 125-132 AND 139-152</scope>
</reference>
<reference evidence="18" key="7">
    <citation type="journal article" date="2019" name="Sci. Rep.">
        <title>Crystal structure of the dog allergen Can f 6 and structure-based implications of its cross-reactivity with the cat allergen Fel d 4.</title>
        <authorList>
            <person name="Yamamoto K."/>
            <person name="Ishibashi O."/>
            <person name="Sugiura K."/>
            <person name="Ubatani M."/>
            <person name="Sakaguchi M."/>
            <person name="Nakatsuji M."/>
            <person name="Shimamoto S."/>
            <person name="Noda M."/>
            <person name="Uchiyama S."/>
            <person name="Fukutomi Y."/>
            <person name="Nishimura S."/>
            <person name="Inui T."/>
        </authorList>
    </citation>
    <scope>X-RAY CRYSTALLOGRAPHY (2.35 ANGSTROMS) OF 16-190</scope>
    <scope>SUBUNIT</scope>
    <scope>ALLERGEN</scope>
    <scope>DISULFIDE BOND</scope>
    <scope>MUTAGENESIS OF 30-SER--ILE-32; 46-LYS--LYS-48; 50-GLU--ASN-52; 115-TYR--ASP-117 AND 128-GLN--GLN-130</scope>
    <scope>CIRCULAR DICHROISM ANALYSIS</scope>
</reference>
<keyword id="KW-0002">3D-structure</keyword>
<keyword id="KW-0020">Allergen</keyword>
<keyword id="KW-1015">Disulfide bond</keyword>
<keyword id="KW-0325">Glycoprotein</keyword>
<keyword id="KW-1185">Reference proteome</keyword>
<keyword id="KW-0964">Secreted</keyword>
<keyword id="KW-0732">Signal</keyword>
<name>LI601_CANLF</name>
<comment type="subunit">
    <text evidence="5 9">Monomer.</text>
</comment>
<comment type="subcellular location">
    <subcellularLocation>
        <location evidence="7 16">Secreted</location>
    </subcellularLocation>
</comment>
<comment type="tissue specificity">
    <text evidence="4 5 7">Expressed in saliva (at protein level) (PubMed:23464525). Expressed in dander (at protein level) (PubMed:22515174, PubMed:23464525). According to PubMed:22104604, expressed in submaxillary gland (PubMed:22104604). In contrast, according to PubMed:22515174, not expressed in submaxillary gland. Expressed in bladder and skin, but not in tongue (PubMed:22515174).</text>
</comment>
<comment type="allergen">
    <text evidence="4 5 6 7 8 9">Causes an allergic reaction in human. Binds to IgE (PubMed:22104604, PubMed:22515174, PubMed:23464491, PubMed:23464525, PubMed:29207604, PubMed:30728436). Binds to IgE in 61% of the 44 patients tested allergic to both dog and cat dander (PubMed:22104604). Binds to IgE in 38% of the 100 patients tested allergic to dog dander (PubMed:22515174). Binds to IgE in all 3 patients tested allergic to both dog and horse dander (PubMed:23464491). Binds to IgE in 56% of the 32 Chinese children tested allergic to dog (PubMed:29207604). Binds to IgE in 47% of the 38 patients tested allergic to dog dander (PubMed:30728436). Causes activation of human basophils (PubMed:22515174, PubMed:29207604).</text>
</comment>
<comment type="similarity">
    <text evidence="1 3 15">Belongs to the calycin superfamily. Lipocalin family.</text>
</comment>
<feature type="signal peptide" evidence="1">
    <location>
        <begin position="1"/>
        <end position="15"/>
    </location>
</feature>
<feature type="chain" id="PRO_5012858929" description="Lipocalin Can f 6.0101" evidence="1">
    <location>
        <begin position="16"/>
        <end position="190"/>
    </location>
</feature>
<feature type="region of interest" description="IgE-binding" evidence="8">
    <location>
        <begin position="43"/>
        <end position="54"/>
    </location>
</feature>
<feature type="region of interest" description="IgE-binding" evidence="8">
    <location>
        <begin position="76"/>
        <end position="83"/>
    </location>
</feature>
<feature type="region of interest" description="IgE-binding" evidence="8">
    <location>
        <begin position="91"/>
        <end position="97"/>
    </location>
</feature>
<feature type="region of interest" description="No IgE-binding" evidence="8">
    <location>
        <begin position="100"/>
        <end position="109"/>
    </location>
</feature>
<feature type="region of interest" description="IgE-binding" evidence="8">
    <location>
        <begin position="125"/>
        <end position="132"/>
    </location>
</feature>
<feature type="region of interest" description="IgE-binding" evidence="8">
    <location>
        <begin position="139"/>
        <end position="152"/>
    </location>
</feature>
<feature type="glycosylation site" description="N-linked (GlcNAc...) asparagine" evidence="2">
    <location>
        <position position="52"/>
    </location>
</feature>
<feature type="glycosylation site" description="N-linked (GlcNAc...) asparagine" evidence="2">
    <location>
        <position position="67"/>
    </location>
</feature>
<feature type="glycosylation site" description="N-linked (GlcNAc...) asparagine" evidence="2">
    <location>
        <position position="90"/>
    </location>
</feature>
<feature type="disulfide bond" evidence="9 18">
    <location>
        <begin position="82"/>
        <end position="175"/>
    </location>
</feature>
<feature type="mutagenesis site" description="Decreased IgE reactivity by approximately 7% compared to wild-type." evidence="9">
    <original>SKI</original>
    <variation>AAA</variation>
    <location>
        <begin position="30"/>
        <end position="32"/>
    </location>
</feature>
<feature type="mutagenesis site" description="Decreased IgE reactivity by approximately 15% compared to wild-type." evidence="9">
    <original>KEK</original>
    <variation>AAA</variation>
    <location>
        <begin position="46"/>
        <end position="48"/>
    </location>
</feature>
<feature type="mutagenesis site" description="Decreased IgE reactivity by approximately 15% compared to wild-type." evidence="9">
    <original>EEN</original>
    <variation>AAA</variation>
    <location>
        <begin position="50"/>
        <end position="52"/>
    </location>
</feature>
<feature type="mutagenesis site" description="No effect on IgE reactivity." evidence="9">
    <original>YED</original>
    <variation>AAA</variation>
    <location>
        <begin position="115"/>
        <end position="117"/>
    </location>
</feature>
<feature type="mutagenesis site" description="No effect on IgE reactivity." evidence="9">
    <original>QEQ</original>
    <variation>AAA</variation>
    <location>
        <begin position="128"/>
        <end position="130"/>
    </location>
</feature>
<feature type="helix" evidence="19">
    <location>
        <begin position="29"/>
        <end position="32"/>
    </location>
</feature>
<feature type="strand" evidence="19">
    <location>
        <begin position="37"/>
        <end position="45"/>
    </location>
</feature>
<feature type="helix" evidence="19">
    <location>
        <begin position="46"/>
        <end position="48"/>
    </location>
</feature>
<feature type="strand" evidence="19">
    <location>
        <begin position="58"/>
        <end position="64"/>
    </location>
</feature>
<feature type="strand" evidence="19">
    <location>
        <begin position="66"/>
        <end position="78"/>
    </location>
</feature>
<feature type="strand" evidence="19">
    <location>
        <begin position="81"/>
        <end position="91"/>
    </location>
</feature>
<feature type="strand" evidence="19">
    <location>
        <begin position="97"/>
        <end position="114"/>
    </location>
</feature>
<feature type="turn" evidence="19">
    <location>
        <begin position="115"/>
        <end position="117"/>
    </location>
</feature>
<feature type="strand" evidence="19">
    <location>
        <begin position="118"/>
        <end position="126"/>
    </location>
</feature>
<feature type="strand" evidence="19">
    <location>
        <begin position="132"/>
        <end position="142"/>
    </location>
</feature>
<feature type="helix" evidence="19">
    <location>
        <begin position="146"/>
        <end position="158"/>
    </location>
</feature>
<feature type="helix" evidence="19">
    <location>
        <begin position="163"/>
        <end position="165"/>
    </location>
</feature>
<feature type="strand" evidence="19">
    <location>
        <begin position="166"/>
        <end position="168"/>
    </location>
</feature>
<feature type="helix" evidence="19">
    <location>
        <begin position="176"/>
        <end position="178"/>
    </location>
</feature>
<organism evidence="17">
    <name type="scientific">Canis lupus familiaris</name>
    <name type="common">Dog</name>
    <name type="synonym">Canis familiaris</name>
    <dbReference type="NCBI Taxonomy" id="9615"/>
    <lineage>
        <taxon>Eukaryota</taxon>
        <taxon>Metazoa</taxon>
        <taxon>Chordata</taxon>
        <taxon>Craniata</taxon>
        <taxon>Vertebrata</taxon>
        <taxon>Euteleostomi</taxon>
        <taxon>Mammalia</taxon>
        <taxon>Eutheria</taxon>
        <taxon>Laurasiatheria</taxon>
        <taxon>Carnivora</taxon>
        <taxon>Caniformia</taxon>
        <taxon>Canidae</taxon>
        <taxon>Canis</taxon>
    </lineage>
</organism>
<dbReference type="EMBL" id="HE653774">
    <property type="protein sequence ID" value="CCF72371.1"/>
    <property type="molecule type" value="mRNA"/>
</dbReference>
<dbReference type="EMBL" id="AAEX03008079">
    <property type="status" value="NOT_ANNOTATED_CDS"/>
    <property type="molecule type" value="Genomic_DNA"/>
</dbReference>
<dbReference type="RefSeq" id="NP_001271390.1">
    <property type="nucleotide sequence ID" value="NM_001284461.1"/>
</dbReference>
<dbReference type="RefSeq" id="XP_855342.1">
    <property type="nucleotide sequence ID" value="XM_850249.3"/>
</dbReference>
<dbReference type="PDB" id="5X7Y">
    <property type="method" value="X-ray"/>
    <property type="resolution" value="2.35 A"/>
    <property type="chains" value="A/B/C/D=16-190"/>
</dbReference>
<dbReference type="PDB" id="6NRE">
    <property type="method" value="X-ray"/>
    <property type="resolution" value="2.06 A"/>
    <property type="chains" value="A=16-190"/>
</dbReference>
<dbReference type="PDBsum" id="5X7Y"/>
<dbReference type="PDBsum" id="6NRE"/>
<dbReference type="SMR" id="H2B3G5"/>
<dbReference type="FunCoup" id="H2B3G5">
    <property type="interactions" value="1"/>
</dbReference>
<dbReference type="STRING" id="9615.ENSCAFP00000057458"/>
<dbReference type="Allergome" id="9406">
    <property type="allergen name" value="Can f 6"/>
</dbReference>
<dbReference type="PaxDb" id="9612-ENSCAFP00000004571"/>
<dbReference type="Ensembl" id="ENSCAFT00000004932.5">
    <property type="protein sequence ID" value="ENSCAFP00000004571.4"/>
    <property type="gene ID" value="ENSCAFG00000003064.6"/>
</dbReference>
<dbReference type="Ensembl" id="ENSCAFT00030045368.1">
    <property type="protein sequence ID" value="ENSCAFP00030039616.1"/>
    <property type="gene ID" value="ENSCAFG00030024661.1"/>
</dbReference>
<dbReference type="Ensembl" id="ENSCAFT00040029774.1">
    <property type="protein sequence ID" value="ENSCAFP00040025863.1"/>
    <property type="gene ID" value="ENSCAFG00040016155.1"/>
</dbReference>
<dbReference type="Ensembl" id="ENSCAFT00845012656.1">
    <property type="protein sequence ID" value="ENSCAFP00845009874.1"/>
    <property type="gene ID" value="ENSCAFG00845007127.1"/>
</dbReference>
<dbReference type="GeneID" id="481674"/>
<dbReference type="KEGG" id="cfa:481674"/>
<dbReference type="VEuPathDB" id="HostDB:ENSCAFG00845007127"/>
<dbReference type="GeneTree" id="ENSGT01050000244868"/>
<dbReference type="InParanoid" id="H2B3G5"/>
<dbReference type="OrthoDB" id="28268at33554"/>
<dbReference type="Proteomes" id="UP000002254">
    <property type="component" value="Chromosome 11"/>
</dbReference>
<dbReference type="Proteomes" id="UP000694429">
    <property type="component" value="Chromosome 11"/>
</dbReference>
<dbReference type="Proteomes" id="UP000694542">
    <property type="component" value="Chromosome 11"/>
</dbReference>
<dbReference type="Proteomes" id="UP000805418">
    <property type="component" value="Chromosome 11"/>
</dbReference>
<dbReference type="Bgee" id="ENSCAFG00000003064">
    <property type="expression patterns" value="Expressed in saliva-secreting gland and 46 other cell types or tissues"/>
</dbReference>
<dbReference type="GO" id="GO:0005576">
    <property type="term" value="C:extracellular region"/>
    <property type="evidence" value="ECO:0000314"/>
    <property type="project" value="UniProtKB"/>
</dbReference>
<dbReference type="GO" id="GO:0005615">
    <property type="term" value="C:extracellular space"/>
    <property type="evidence" value="ECO:0000314"/>
    <property type="project" value="UniProtKB"/>
</dbReference>
<dbReference type="GO" id="GO:0005549">
    <property type="term" value="F:odorant binding"/>
    <property type="evidence" value="ECO:0000318"/>
    <property type="project" value="GO_Central"/>
</dbReference>
<dbReference type="GO" id="GO:0036094">
    <property type="term" value="F:small molecule binding"/>
    <property type="evidence" value="ECO:0007669"/>
    <property type="project" value="InterPro"/>
</dbReference>
<dbReference type="FunFam" id="2.40.128.20:FF:000008">
    <property type="entry name" value="Major urinary protein"/>
    <property type="match status" value="1"/>
</dbReference>
<dbReference type="Gene3D" id="2.40.128.20">
    <property type="match status" value="1"/>
</dbReference>
<dbReference type="InterPro" id="IPR012674">
    <property type="entry name" value="Calycin"/>
</dbReference>
<dbReference type="InterPro" id="IPR002345">
    <property type="entry name" value="Lipocalin"/>
</dbReference>
<dbReference type="InterPro" id="IPR022272">
    <property type="entry name" value="Lipocalin_CS"/>
</dbReference>
<dbReference type="InterPro" id="IPR000566">
    <property type="entry name" value="Lipocln_cytosolic_FA-bd_dom"/>
</dbReference>
<dbReference type="InterPro" id="IPR002971">
    <property type="entry name" value="Maj_urinary"/>
</dbReference>
<dbReference type="PANTHER" id="PTHR11430">
    <property type="entry name" value="LIPOCALIN"/>
    <property type="match status" value="1"/>
</dbReference>
<dbReference type="PANTHER" id="PTHR11430:SF76">
    <property type="entry name" value="MAJOR URINARY PROTEIN 1-RELATED"/>
    <property type="match status" value="1"/>
</dbReference>
<dbReference type="Pfam" id="PF00061">
    <property type="entry name" value="Lipocalin"/>
    <property type="match status" value="1"/>
</dbReference>
<dbReference type="PRINTS" id="PR00179">
    <property type="entry name" value="LIPOCALIN"/>
</dbReference>
<dbReference type="PRINTS" id="PR01221">
    <property type="entry name" value="MAJORURINARY"/>
</dbReference>
<dbReference type="SUPFAM" id="SSF50814">
    <property type="entry name" value="Lipocalins"/>
    <property type="match status" value="1"/>
</dbReference>
<dbReference type="PROSITE" id="PS00213">
    <property type="entry name" value="LIPOCALIN"/>
    <property type="match status" value="1"/>
</dbReference>
<proteinExistence type="evidence at protein level"/>
<protein>
    <recommendedName>
        <fullName evidence="11">Lipocalin Can f 6.0101</fullName>
    </recommendedName>
    <alternativeName>
        <fullName evidence="12 13 14">Allergen Can f 6</fullName>
    </alternativeName>
    <allergenName evidence="11">Can f 6.0101</allergenName>
</protein>
<accession>H2B3G5</accession>
<evidence type="ECO:0000255" key="1"/>
<evidence type="ECO:0000255" key="2">
    <source>
        <dbReference type="PROSITE-ProRule" id="PRU00498"/>
    </source>
</evidence>
<evidence type="ECO:0000255" key="3">
    <source>
        <dbReference type="RuleBase" id="RU003695"/>
    </source>
</evidence>
<evidence type="ECO:0000269" key="4">
    <source>
    </source>
</evidence>
<evidence type="ECO:0000269" key="5">
    <source>
    </source>
</evidence>
<evidence type="ECO:0000269" key="6">
    <source>
    </source>
</evidence>
<evidence type="ECO:0000269" key="7">
    <source>
    </source>
</evidence>
<evidence type="ECO:0000269" key="8">
    <source>
    </source>
</evidence>
<evidence type="ECO:0000269" key="9">
    <source>
    </source>
</evidence>
<evidence type="ECO:0000303" key="10">
    <source>
    </source>
</evidence>
<evidence type="ECO:0000303" key="11">
    <source>
    </source>
</evidence>
<evidence type="ECO:0000303" key="12">
    <source>
    </source>
</evidence>
<evidence type="ECO:0000303" key="13">
    <source>
    </source>
</evidence>
<evidence type="ECO:0000303" key="14">
    <source>
    </source>
</evidence>
<evidence type="ECO:0000305" key="15"/>
<evidence type="ECO:0000305" key="16">
    <source>
    </source>
</evidence>
<evidence type="ECO:0000312" key="17">
    <source>
        <dbReference type="EMBL" id="CCF72371.1"/>
    </source>
</evidence>
<evidence type="ECO:0007744" key="18">
    <source>
        <dbReference type="PDB" id="5X7Y"/>
    </source>
</evidence>
<evidence type="ECO:0007829" key="19">
    <source>
        <dbReference type="PDB" id="6NRE"/>
    </source>
</evidence>
<sequence length="190" mass="21825">MKLLLLCLGLILVHAHEEENDVVKGNFDISKISGDWYSILLASDIKEKIEENGSMRVFVKDIEVLSNSSLIFTMHTKVNGKCTKISLICNKTEKDGEYDVVHDGYNLFRIIETAYEDYIIFHLNNVNQEQEFQLMELYGRKPDVSPKVKEKFVRYCQGMEIPKENILDLTQVDRCLQARQSEAAQVSSAE</sequence>